<comment type="function">
    <text evidence="1">Catalyzes the last two steps in the biosynthesis of 5-methylaminomethyl-2-thiouridine (mnm(5)s(2)U) at the wobble position (U34) in tRNA. Catalyzes the FAD-dependent demodification of cmnm(5)s(2)U34 to nm(5)s(2)U34, followed by the transfer of a methyl group from S-adenosyl-L-methionine to nm(5)s(2)U34, to form mnm(5)s(2)U34.</text>
</comment>
<comment type="catalytic activity">
    <reaction evidence="1">
        <text>5-aminomethyl-2-thiouridine(34) in tRNA + S-adenosyl-L-methionine = 5-methylaminomethyl-2-thiouridine(34) in tRNA + S-adenosyl-L-homocysteine + H(+)</text>
        <dbReference type="Rhea" id="RHEA:19569"/>
        <dbReference type="Rhea" id="RHEA-COMP:10195"/>
        <dbReference type="Rhea" id="RHEA-COMP:10197"/>
        <dbReference type="ChEBI" id="CHEBI:15378"/>
        <dbReference type="ChEBI" id="CHEBI:57856"/>
        <dbReference type="ChEBI" id="CHEBI:59789"/>
        <dbReference type="ChEBI" id="CHEBI:74454"/>
        <dbReference type="ChEBI" id="CHEBI:74455"/>
        <dbReference type="EC" id="2.1.1.61"/>
    </reaction>
</comment>
<comment type="cofactor">
    <cofactor evidence="1">
        <name>FAD</name>
        <dbReference type="ChEBI" id="CHEBI:57692"/>
    </cofactor>
</comment>
<comment type="subcellular location">
    <subcellularLocation>
        <location evidence="1">Cytoplasm</location>
    </subcellularLocation>
</comment>
<comment type="similarity">
    <text evidence="1">In the N-terminal section; belongs to the methyltransferase superfamily. tRNA (mnm(5)s(2)U34)-methyltransferase family.</text>
</comment>
<comment type="similarity">
    <text evidence="1">In the C-terminal section; belongs to the DAO family.</text>
</comment>
<accession>A5W7H7</accession>
<protein>
    <recommendedName>
        <fullName evidence="1">tRNA 5-methylaminomethyl-2-thiouridine biosynthesis bifunctional protein MnmC</fullName>
        <shortName evidence="1">tRNA mnm(5)s(2)U biosynthesis bifunctional protein</shortName>
    </recommendedName>
    <domain>
        <recommendedName>
            <fullName evidence="1">tRNA (mnm(5)s(2)U34)-methyltransferase</fullName>
            <ecNumber evidence="1">2.1.1.61</ecNumber>
        </recommendedName>
    </domain>
    <domain>
        <recommendedName>
            <fullName evidence="1">FAD-dependent cmnm(5)s(2)U34 oxidoreductase</fullName>
            <ecNumber evidence="1">1.5.-.-</ecNumber>
        </recommendedName>
    </domain>
</protein>
<feature type="chain" id="PRO_1000065006" description="tRNA 5-methylaminomethyl-2-thiouridine biosynthesis bifunctional protein MnmC">
    <location>
        <begin position="1"/>
        <end position="654"/>
    </location>
</feature>
<feature type="region of interest" description="tRNA (mnm(5)s(2)U34)-methyltransferase">
    <location>
        <begin position="1"/>
        <end position="236"/>
    </location>
</feature>
<feature type="region of interest" description="FAD-dependent cmnm(5)s(2)U34 oxidoreductase">
    <location>
        <begin position="262"/>
        <end position="654"/>
    </location>
</feature>
<proteinExistence type="inferred from homology"/>
<reference key="1">
    <citation type="submission" date="2007-05" db="EMBL/GenBank/DDBJ databases">
        <title>Complete sequence of Pseudomonas putida F1.</title>
        <authorList>
            <consortium name="US DOE Joint Genome Institute"/>
            <person name="Copeland A."/>
            <person name="Lucas S."/>
            <person name="Lapidus A."/>
            <person name="Barry K."/>
            <person name="Detter J.C."/>
            <person name="Glavina del Rio T."/>
            <person name="Hammon N."/>
            <person name="Israni S."/>
            <person name="Dalin E."/>
            <person name="Tice H."/>
            <person name="Pitluck S."/>
            <person name="Chain P."/>
            <person name="Malfatti S."/>
            <person name="Shin M."/>
            <person name="Vergez L."/>
            <person name="Schmutz J."/>
            <person name="Larimer F."/>
            <person name="Land M."/>
            <person name="Hauser L."/>
            <person name="Kyrpides N."/>
            <person name="Lykidis A."/>
            <person name="Parales R."/>
            <person name="Richardson P."/>
        </authorList>
    </citation>
    <scope>NUCLEOTIDE SEQUENCE [LARGE SCALE GENOMIC DNA]</scope>
    <source>
        <strain>ATCC 700007 / DSM 6899 / JCM 31910 / BCRC 17059 / LMG 24140 / F1</strain>
    </source>
</reference>
<keyword id="KW-0963">Cytoplasm</keyword>
<keyword id="KW-0274">FAD</keyword>
<keyword id="KW-0285">Flavoprotein</keyword>
<keyword id="KW-0489">Methyltransferase</keyword>
<keyword id="KW-0511">Multifunctional enzyme</keyword>
<keyword id="KW-0560">Oxidoreductase</keyword>
<keyword id="KW-0949">S-adenosyl-L-methionine</keyword>
<keyword id="KW-0808">Transferase</keyword>
<keyword id="KW-0819">tRNA processing</keyword>
<name>MNMC_PSEP1</name>
<evidence type="ECO:0000255" key="1">
    <source>
        <dbReference type="HAMAP-Rule" id="MF_01102"/>
    </source>
</evidence>
<organism>
    <name type="scientific">Pseudomonas putida (strain ATCC 700007 / DSM 6899 / JCM 31910 / BCRC 17059 / LMG 24140 / F1)</name>
    <dbReference type="NCBI Taxonomy" id="351746"/>
    <lineage>
        <taxon>Bacteria</taxon>
        <taxon>Pseudomonadati</taxon>
        <taxon>Pseudomonadota</taxon>
        <taxon>Gammaproteobacteria</taxon>
        <taxon>Pseudomonadales</taxon>
        <taxon>Pseudomonadaceae</taxon>
        <taxon>Pseudomonas</taxon>
    </lineage>
</organism>
<gene>
    <name evidence="1" type="primary">mnmC</name>
    <name type="ordered locus">Pput_3963</name>
</gene>
<sequence>MPTLLQHAQIDWDDQGRPHSRHYDDVYFAVNEGIEETKHVFLGQTRLAERFAHLAPHACTVIGETGFGTGMNFFCAWQLFDQHAHSDARLHFVSVEKYPLDHADMARAVRLWPELAAYTEPLLEQYVAVHPGFQQFTFAGGRVTLTLLIGDVLEQLPQLDAQIDVWFLDGFAPAKNPDMWTPELFAQLARLSHPGTVLGTFTTTGWVRRSLVEAGFAMKKVPGIGKKWEVMSGAYVGPLPGPCAPWYARPAVTQGPREALVIGAGLAGSSSAASLARRGWQVTVLERHEAPAQEASGNPQGVLYLKLSAHGTALSQMILSGFGYTRRQLQRLQRGRDWDACGVLQLAFDSKEAERQGKLAAAFDPGLLHCLARAEAEAIAGVALPGGGLFYPEGGWVHPPALCQQQLQHPGIRVVTHQDVLELRKVDEHWQAWAGDQLLARAPVVVLAGAADVLRFEPCAQLPLKRIRGQITRLPATASSQALRTVVCAEGYVAPPREGEHTLGASFDFHSEDLAPTVAEHQGNLALLDEISVDLAQRLAVAELDPEQLQGRAAFRCTSPDYLPIVGPIADAQAFAEAYAVLGRDARQVPDVPCPWLGGLYVNSGHGSRGLITAPLSGELVAAWVCGEPLPLPRAVAQACHPNRFGLRRLIRGK</sequence>
<dbReference type="EC" id="2.1.1.61" evidence="1"/>
<dbReference type="EC" id="1.5.-.-" evidence="1"/>
<dbReference type="EMBL" id="CP000712">
    <property type="protein sequence ID" value="ABQ80087.1"/>
    <property type="molecule type" value="Genomic_DNA"/>
</dbReference>
<dbReference type="SMR" id="A5W7H7"/>
<dbReference type="KEGG" id="ppf:Pput_3963"/>
<dbReference type="eggNOG" id="COG0665">
    <property type="taxonomic scope" value="Bacteria"/>
</dbReference>
<dbReference type="eggNOG" id="COG4121">
    <property type="taxonomic scope" value="Bacteria"/>
</dbReference>
<dbReference type="HOGENOM" id="CLU_022427_1_0_6"/>
<dbReference type="GO" id="GO:0005737">
    <property type="term" value="C:cytoplasm"/>
    <property type="evidence" value="ECO:0007669"/>
    <property type="project" value="UniProtKB-SubCell"/>
</dbReference>
<dbReference type="GO" id="GO:0050660">
    <property type="term" value="F:flavin adenine dinucleotide binding"/>
    <property type="evidence" value="ECO:0007669"/>
    <property type="project" value="UniProtKB-UniRule"/>
</dbReference>
<dbReference type="GO" id="GO:0016645">
    <property type="term" value="F:oxidoreductase activity, acting on the CH-NH group of donors"/>
    <property type="evidence" value="ECO:0007669"/>
    <property type="project" value="InterPro"/>
</dbReference>
<dbReference type="GO" id="GO:0004808">
    <property type="term" value="F:tRNA (5-methylaminomethyl-2-thiouridylate)(34)-methyltransferase activity"/>
    <property type="evidence" value="ECO:0007669"/>
    <property type="project" value="UniProtKB-EC"/>
</dbReference>
<dbReference type="GO" id="GO:0032259">
    <property type="term" value="P:methylation"/>
    <property type="evidence" value="ECO:0007669"/>
    <property type="project" value="UniProtKB-KW"/>
</dbReference>
<dbReference type="GO" id="GO:0002098">
    <property type="term" value="P:tRNA wobble uridine modification"/>
    <property type="evidence" value="ECO:0007669"/>
    <property type="project" value="TreeGrafter"/>
</dbReference>
<dbReference type="Gene3D" id="3.30.9.10">
    <property type="entry name" value="D-Amino Acid Oxidase, subunit A, domain 2"/>
    <property type="match status" value="1"/>
</dbReference>
<dbReference type="Gene3D" id="3.50.50.60">
    <property type="entry name" value="FAD/NAD(P)-binding domain"/>
    <property type="match status" value="1"/>
</dbReference>
<dbReference type="Gene3D" id="3.40.50.150">
    <property type="entry name" value="Vaccinia Virus protein VP39"/>
    <property type="match status" value="1"/>
</dbReference>
<dbReference type="HAMAP" id="MF_01102">
    <property type="entry name" value="MnmC"/>
    <property type="match status" value="1"/>
</dbReference>
<dbReference type="InterPro" id="IPR006076">
    <property type="entry name" value="FAD-dep_OxRdtase"/>
</dbReference>
<dbReference type="InterPro" id="IPR036188">
    <property type="entry name" value="FAD/NAD-bd_sf"/>
</dbReference>
<dbReference type="InterPro" id="IPR008471">
    <property type="entry name" value="MnmC-like_methylTransf"/>
</dbReference>
<dbReference type="InterPro" id="IPR029063">
    <property type="entry name" value="SAM-dependent_MTases_sf"/>
</dbReference>
<dbReference type="InterPro" id="IPR023032">
    <property type="entry name" value="tRNA_MAMT_biosynth_bifunc_MnmC"/>
</dbReference>
<dbReference type="InterPro" id="IPR047785">
    <property type="entry name" value="tRNA_MNMC2"/>
</dbReference>
<dbReference type="InterPro" id="IPR017610">
    <property type="entry name" value="tRNA_S-uridine_synth_MnmC_C"/>
</dbReference>
<dbReference type="NCBIfam" id="TIGR03197">
    <property type="entry name" value="MnmC_Cterm"/>
    <property type="match status" value="1"/>
</dbReference>
<dbReference type="NCBIfam" id="NF002481">
    <property type="entry name" value="PRK01747.1-2"/>
    <property type="match status" value="1"/>
</dbReference>
<dbReference type="NCBIfam" id="NF033855">
    <property type="entry name" value="tRNA_MNMC2"/>
    <property type="match status" value="1"/>
</dbReference>
<dbReference type="PANTHER" id="PTHR13847">
    <property type="entry name" value="SARCOSINE DEHYDROGENASE-RELATED"/>
    <property type="match status" value="1"/>
</dbReference>
<dbReference type="PANTHER" id="PTHR13847:SF283">
    <property type="entry name" value="TRNA 5-METHYLAMINOMETHYL-2-THIOURIDINE BIOSYNTHESIS BIFUNCTIONAL PROTEIN MNMC"/>
    <property type="match status" value="1"/>
</dbReference>
<dbReference type="Pfam" id="PF01266">
    <property type="entry name" value="DAO"/>
    <property type="match status" value="1"/>
</dbReference>
<dbReference type="Pfam" id="PF05430">
    <property type="entry name" value="Methyltransf_30"/>
    <property type="match status" value="1"/>
</dbReference>
<dbReference type="SUPFAM" id="SSF51905">
    <property type="entry name" value="FAD/NAD(P)-binding domain"/>
    <property type="match status" value="1"/>
</dbReference>
<dbReference type="SUPFAM" id="SSF53335">
    <property type="entry name" value="S-adenosyl-L-methionine-dependent methyltransferases"/>
    <property type="match status" value="1"/>
</dbReference>